<keyword id="KW-0539">Nucleus</keyword>
<keyword id="KW-1185">Reference proteome</keyword>
<comment type="function">
    <text evidence="1">Regulator of type 1 phosphatases which maintains protein phosphatase activity under strict control.</text>
</comment>
<comment type="subcellular location">
    <subcellularLocation>
        <location evidence="1">Nucleus</location>
    </subcellularLocation>
</comment>
<comment type="similarity">
    <text evidence="3">Belongs to the YPI1 family.</text>
</comment>
<accession>Q59ZW4</accession>
<accession>A0A1D8PFV3</accession>
<evidence type="ECO:0000250" key="1"/>
<evidence type="ECO:0000256" key="2">
    <source>
        <dbReference type="SAM" id="MobiDB-lite"/>
    </source>
</evidence>
<evidence type="ECO:0000305" key="3"/>
<dbReference type="EMBL" id="CP017623">
    <property type="protein sequence ID" value="AOW27019.1"/>
    <property type="molecule type" value="Genomic_DNA"/>
</dbReference>
<dbReference type="RefSeq" id="XP_715028.1">
    <property type="nucleotide sequence ID" value="XM_709935.1"/>
</dbReference>
<dbReference type="SMR" id="Q59ZW4"/>
<dbReference type="STRING" id="237561.Q59ZW4"/>
<dbReference type="EnsemblFungi" id="C1_14190C_A-T">
    <property type="protein sequence ID" value="C1_14190C_A-T-p1"/>
    <property type="gene ID" value="C1_14190C_A"/>
</dbReference>
<dbReference type="GeneID" id="3643300"/>
<dbReference type="KEGG" id="cal:CAALFM_C114190CA"/>
<dbReference type="CGD" id="CAL0000189568">
    <property type="gene designation" value="orf19.7227"/>
</dbReference>
<dbReference type="VEuPathDB" id="FungiDB:C1_14190C_A"/>
<dbReference type="eggNOG" id="KOG4102">
    <property type="taxonomic scope" value="Eukaryota"/>
</dbReference>
<dbReference type="HOGENOM" id="CLU_098333_3_0_1"/>
<dbReference type="InParanoid" id="Q59ZW4"/>
<dbReference type="OMA" id="AYEVQPH"/>
<dbReference type="OrthoDB" id="307488at2759"/>
<dbReference type="Proteomes" id="UP000000559">
    <property type="component" value="Chromosome 1"/>
</dbReference>
<dbReference type="GO" id="GO:0005634">
    <property type="term" value="C:nucleus"/>
    <property type="evidence" value="ECO:0000318"/>
    <property type="project" value="GO_Central"/>
</dbReference>
<dbReference type="GO" id="GO:0008157">
    <property type="term" value="F:protein phosphatase 1 binding"/>
    <property type="evidence" value="ECO:0000318"/>
    <property type="project" value="GO_Central"/>
</dbReference>
<dbReference type="GO" id="GO:0004865">
    <property type="term" value="F:protein serine/threonine phosphatase inhibitor activity"/>
    <property type="evidence" value="ECO:0000318"/>
    <property type="project" value="GO_Central"/>
</dbReference>
<dbReference type="GO" id="GO:0030447">
    <property type="term" value="P:filamentous growth"/>
    <property type="evidence" value="ECO:0000315"/>
    <property type="project" value="CGD"/>
</dbReference>
<dbReference type="InterPro" id="IPR011107">
    <property type="entry name" value="PPI_Ypi1"/>
</dbReference>
<dbReference type="PANTHER" id="PTHR20835:SF0">
    <property type="entry name" value="E3 UBIQUITIN-PROTEIN LIGASE PPP1R11"/>
    <property type="match status" value="1"/>
</dbReference>
<dbReference type="PANTHER" id="PTHR20835">
    <property type="entry name" value="E3 UBIQUITIN-PROTEIN LIGASE PPP1R11-RELATED"/>
    <property type="match status" value="1"/>
</dbReference>
<dbReference type="Pfam" id="PF07491">
    <property type="entry name" value="PPI_Ypi1"/>
    <property type="match status" value="1"/>
</dbReference>
<organism>
    <name type="scientific">Candida albicans (strain SC5314 / ATCC MYA-2876)</name>
    <name type="common">Yeast</name>
    <dbReference type="NCBI Taxonomy" id="237561"/>
    <lineage>
        <taxon>Eukaryota</taxon>
        <taxon>Fungi</taxon>
        <taxon>Dikarya</taxon>
        <taxon>Ascomycota</taxon>
        <taxon>Saccharomycotina</taxon>
        <taxon>Pichiomycetes</taxon>
        <taxon>Debaryomycetaceae</taxon>
        <taxon>Candida/Lodderomyces clade</taxon>
        <taxon>Candida</taxon>
    </lineage>
</organism>
<proteinExistence type="inferred from homology"/>
<gene>
    <name type="primary">YPI1</name>
    <name type="ordered locus">CAALFM_C114190CA</name>
    <name type="ORF">CaO19.7227</name>
</gene>
<feature type="chain" id="PRO_0000333470" description="Type 1 phosphatases regulator YPI1">
    <location>
        <begin position="1"/>
        <end position="124"/>
    </location>
</feature>
<feature type="region of interest" description="Disordered" evidence="2">
    <location>
        <begin position="1"/>
        <end position="38"/>
    </location>
</feature>
<feature type="region of interest" description="Disordered" evidence="2">
    <location>
        <begin position="62"/>
        <end position="124"/>
    </location>
</feature>
<feature type="compositionally biased region" description="Polar residues" evidence="2">
    <location>
        <begin position="1"/>
        <end position="21"/>
    </location>
</feature>
<feature type="compositionally biased region" description="Basic and acidic residues" evidence="2">
    <location>
        <begin position="27"/>
        <end position="37"/>
    </location>
</feature>
<feature type="compositionally biased region" description="Low complexity" evidence="2">
    <location>
        <begin position="72"/>
        <end position="81"/>
    </location>
</feature>
<feature type="compositionally biased region" description="Polar residues" evidence="2">
    <location>
        <begin position="115"/>
        <end position="124"/>
    </location>
</feature>
<sequence>MSQQRENQRGIVSQTTTTTASPILKLRAQERQARDVSWDANVVDNEHLNKKKTKICCIFHPSDRNCDEEDSSSSSDSSSDSSDNEEDDKNTKIAPKSNNNKKKSKPNAYEVQPHYKNQSKVPGK</sequence>
<protein>
    <recommendedName>
        <fullName>Type 1 phosphatases regulator YPI1</fullName>
    </recommendedName>
</protein>
<name>YPI1_CANAL</name>
<reference key="1">
    <citation type="journal article" date="2004" name="Proc. Natl. Acad. Sci. U.S.A.">
        <title>The diploid genome sequence of Candida albicans.</title>
        <authorList>
            <person name="Jones T."/>
            <person name="Federspiel N.A."/>
            <person name="Chibana H."/>
            <person name="Dungan J."/>
            <person name="Kalman S."/>
            <person name="Magee B.B."/>
            <person name="Newport G."/>
            <person name="Thorstenson Y.R."/>
            <person name="Agabian N."/>
            <person name="Magee P.T."/>
            <person name="Davis R.W."/>
            <person name="Scherer S."/>
        </authorList>
    </citation>
    <scope>NUCLEOTIDE SEQUENCE [LARGE SCALE GENOMIC DNA]</scope>
    <source>
        <strain>SC5314 / ATCC MYA-2876</strain>
    </source>
</reference>
<reference key="2">
    <citation type="journal article" date="2007" name="Genome Biol.">
        <title>Assembly of the Candida albicans genome into sixteen supercontigs aligned on the eight chromosomes.</title>
        <authorList>
            <person name="van het Hoog M."/>
            <person name="Rast T.J."/>
            <person name="Martchenko M."/>
            <person name="Grindle S."/>
            <person name="Dignard D."/>
            <person name="Hogues H."/>
            <person name="Cuomo C."/>
            <person name="Berriman M."/>
            <person name="Scherer S."/>
            <person name="Magee B.B."/>
            <person name="Whiteway M."/>
            <person name="Chibana H."/>
            <person name="Nantel A."/>
            <person name="Magee P.T."/>
        </authorList>
    </citation>
    <scope>GENOME REANNOTATION</scope>
    <source>
        <strain>SC5314 / ATCC MYA-2876</strain>
    </source>
</reference>
<reference key="3">
    <citation type="journal article" date="2013" name="Genome Biol.">
        <title>Assembly of a phased diploid Candida albicans genome facilitates allele-specific measurements and provides a simple model for repeat and indel structure.</title>
        <authorList>
            <person name="Muzzey D."/>
            <person name="Schwartz K."/>
            <person name="Weissman J.S."/>
            <person name="Sherlock G."/>
        </authorList>
    </citation>
    <scope>NUCLEOTIDE SEQUENCE [LARGE SCALE GENOMIC DNA]</scope>
    <scope>GENOME REANNOTATION</scope>
    <source>
        <strain>SC5314 / ATCC MYA-2876</strain>
    </source>
</reference>